<organism>
    <name type="scientific">Ruegeria pomeroyi (strain ATCC 700808 / DSM 15171 / DSS-3)</name>
    <name type="common">Silicibacter pomeroyi</name>
    <dbReference type="NCBI Taxonomy" id="246200"/>
    <lineage>
        <taxon>Bacteria</taxon>
        <taxon>Pseudomonadati</taxon>
        <taxon>Pseudomonadota</taxon>
        <taxon>Alphaproteobacteria</taxon>
        <taxon>Rhodobacterales</taxon>
        <taxon>Roseobacteraceae</taxon>
        <taxon>Ruegeria</taxon>
    </lineage>
</organism>
<reference key="1">
    <citation type="journal article" date="2004" name="Nature">
        <title>Genome sequence of Silicibacter pomeroyi reveals adaptations to the marine environment.</title>
        <authorList>
            <person name="Moran M.A."/>
            <person name="Buchan A."/>
            <person name="Gonzalez J.M."/>
            <person name="Heidelberg J.F."/>
            <person name="Whitman W.B."/>
            <person name="Kiene R.P."/>
            <person name="Henriksen J.R."/>
            <person name="King G.M."/>
            <person name="Belas R."/>
            <person name="Fuqua C."/>
            <person name="Brinkac L.M."/>
            <person name="Lewis M."/>
            <person name="Johri S."/>
            <person name="Weaver B."/>
            <person name="Pai G."/>
            <person name="Eisen J.A."/>
            <person name="Rahe E."/>
            <person name="Sheldon W.M."/>
            <person name="Ye W."/>
            <person name="Miller T.R."/>
            <person name="Carlton J."/>
            <person name="Rasko D.A."/>
            <person name="Paulsen I.T."/>
            <person name="Ren Q."/>
            <person name="Daugherty S.C."/>
            <person name="DeBoy R.T."/>
            <person name="Dodson R.J."/>
            <person name="Durkin A.S."/>
            <person name="Madupu R."/>
            <person name="Nelson W.C."/>
            <person name="Sullivan S.A."/>
            <person name="Rosovitz M.J."/>
            <person name="Haft D.H."/>
            <person name="Selengut J."/>
            <person name="Ward N."/>
        </authorList>
    </citation>
    <scope>NUCLEOTIDE SEQUENCE [LARGE SCALE GENOMIC DNA]</scope>
    <source>
        <strain>ATCC 700808 / DSM 15171 / DSS-3</strain>
    </source>
</reference>
<reference key="2">
    <citation type="journal article" date="2014" name="Stand. Genomic Sci.">
        <title>An updated genome annotation for the model marine bacterium Ruegeria pomeroyi DSS-3.</title>
        <authorList>
            <person name="Rivers A.R."/>
            <person name="Smith C.B."/>
            <person name="Moran M.A."/>
        </authorList>
    </citation>
    <scope>GENOME REANNOTATION</scope>
    <source>
        <strain>ATCC 700808 / DSM 15171 / DSS-3</strain>
    </source>
</reference>
<feature type="chain" id="PRO_0000181163" description="Large ribosomal subunit protein bL27">
    <location>
        <begin position="1"/>
        <end position="89"/>
    </location>
</feature>
<feature type="region of interest" description="Disordered" evidence="2">
    <location>
        <begin position="1"/>
        <end position="20"/>
    </location>
</feature>
<accession>Q5LRY1</accession>
<keyword id="KW-1185">Reference proteome</keyword>
<keyword id="KW-0687">Ribonucleoprotein</keyword>
<keyword id="KW-0689">Ribosomal protein</keyword>
<evidence type="ECO:0000255" key="1">
    <source>
        <dbReference type="HAMAP-Rule" id="MF_00539"/>
    </source>
</evidence>
<evidence type="ECO:0000256" key="2">
    <source>
        <dbReference type="SAM" id="MobiDB-lite"/>
    </source>
</evidence>
<evidence type="ECO:0000305" key="3"/>
<dbReference type="EMBL" id="CP000031">
    <property type="protein sequence ID" value="AAV95265.1"/>
    <property type="molecule type" value="Genomic_DNA"/>
</dbReference>
<dbReference type="RefSeq" id="WP_011047720.1">
    <property type="nucleotide sequence ID" value="NC_003911.12"/>
</dbReference>
<dbReference type="SMR" id="Q5LRY1"/>
<dbReference type="STRING" id="246200.SPO1989"/>
<dbReference type="PaxDb" id="246200-SPO1989"/>
<dbReference type="KEGG" id="sil:SPO1989"/>
<dbReference type="eggNOG" id="COG0211">
    <property type="taxonomic scope" value="Bacteria"/>
</dbReference>
<dbReference type="HOGENOM" id="CLU_095424_4_1_5"/>
<dbReference type="OrthoDB" id="9803474at2"/>
<dbReference type="Proteomes" id="UP000001023">
    <property type="component" value="Chromosome"/>
</dbReference>
<dbReference type="GO" id="GO:1990904">
    <property type="term" value="C:ribonucleoprotein complex"/>
    <property type="evidence" value="ECO:0007669"/>
    <property type="project" value="UniProtKB-KW"/>
</dbReference>
<dbReference type="GO" id="GO:0005840">
    <property type="term" value="C:ribosome"/>
    <property type="evidence" value="ECO:0007669"/>
    <property type="project" value="UniProtKB-KW"/>
</dbReference>
<dbReference type="GO" id="GO:0003735">
    <property type="term" value="F:structural constituent of ribosome"/>
    <property type="evidence" value="ECO:0007669"/>
    <property type="project" value="InterPro"/>
</dbReference>
<dbReference type="GO" id="GO:0006412">
    <property type="term" value="P:translation"/>
    <property type="evidence" value="ECO:0007669"/>
    <property type="project" value="UniProtKB-UniRule"/>
</dbReference>
<dbReference type="FunFam" id="2.40.50.100:FF:000020">
    <property type="entry name" value="50S ribosomal protein L27"/>
    <property type="match status" value="1"/>
</dbReference>
<dbReference type="Gene3D" id="2.40.50.100">
    <property type="match status" value="1"/>
</dbReference>
<dbReference type="HAMAP" id="MF_00539">
    <property type="entry name" value="Ribosomal_bL27"/>
    <property type="match status" value="1"/>
</dbReference>
<dbReference type="InterPro" id="IPR001684">
    <property type="entry name" value="Ribosomal_bL27"/>
</dbReference>
<dbReference type="InterPro" id="IPR018261">
    <property type="entry name" value="Ribosomal_bL27_CS"/>
</dbReference>
<dbReference type="NCBIfam" id="TIGR00062">
    <property type="entry name" value="L27"/>
    <property type="match status" value="1"/>
</dbReference>
<dbReference type="PANTHER" id="PTHR15893:SF0">
    <property type="entry name" value="LARGE RIBOSOMAL SUBUNIT PROTEIN BL27M"/>
    <property type="match status" value="1"/>
</dbReference>
<dbReference type="PANTHER" id="PTHR15893">
    <property type="entry name" value="RIBOSOMAL PROTEIN L27"/>
    <property type="match status" value="1"/>
</dbReference>
<dbReference type="Pfam" id="PF01016">
    <property type="entry name" value="Ribosomal_L27"/>
    <property type="match status" value="1"/>
</dbReference>
<dbReference type="PRINTS" id="PR00063">
    <property type="entry name" value="RIBOSOMALL27"/>
</dbReference>
<dbReference type="SUPFAM" id="SSF110324">
    <property type="entry name" value="Ribosomal L27 protein-like"/>
    <property type="match status" value="1"/>
</dbReference>
<dbReference type="PROSITE" id="PS00831">
    <property type="entry name" value="RIBOSOMAL_L27"/>
    <property type="match status" value="1"/>
</dbReference>
<protein>
    <recommendedName>
        <fullName evidence="1">Large ribosomal subunit protein bL27</fullName>
    </recommendedName>
    <alternativeName>
        <fullName evidence="3">50S ribosomal protein L27</fullName>
    </alternativeName>
</protein>
<sequence>MAHKKAGGSSRNGRDSIGRRLGVKKYGGEAVGAGNILVRQRGTKFWPGEGVGMGKDHTIFATVDGAVKFHKGLKKRTFISVLPVAEAAE</sequence>
<proteinExistence type="inferred from homology"/>
<comment type="similarity">
    <text evidence="1">Belongs to the bacterial ribosomal protein bL27 family.</text>
</comment>
<gene>
    <name evidence="1" type="primary">rpmA</name>
    <name type="ordered locus">SPO1989</name>
</gene>
<name>RL27_RUEPO</name>